<sequence>MTLIFIMISAIFVNNFVLSRFLGICPFLGVSKQVETAVGMGVAVTFVMALASAITYVVQYAILDPLSLGYLQTIAFILIIAALVQLVEMIIKKSSPSLYQALGVYLPLITTNCAVLGVALINIQNEYNFIETIFNGVGAALGFTLAIVLFAGIRERLETSAVPKALEGFPIALLTAGLMAIAFLGFSGMKLG</sequence>
<keyword id="KW-0002">3D-structure</keyword>
<keyword id="KW-1003">Cell membrane</keyword>
<keyword id="KW-0249">Electron transport</keyword>
<keyword id="KW-0472">Membrane</keyword>
<keyword id="KW-0520">NAD</keyword>
<keyword id="KW-1185">Reference proteome</keyword>
<keyword id="KW-1278">Translocase</keyword>
<keyword id="KW-0812">Transmembrane</keyword>
<keyword id="KW-1133">Transmembrane helix</keyword>
<keyword id="KW-0813">Transport</keyword>
<proteinExistence type="evidence at protein level"/>
<dbReference type="EC" id="7.2.1.2" evidence="2 3"/>
<dbReference type="EMBL" id="FJ416148">
    <property type="protein sequence ID" value="ACR23746.1"/>
    <property type="molecule type" value="Genomic_DNA"/>
</dbReference>
<dbReference type="EMBL" id="CP002987">
    <property type="protein sequence ID" value="AFA48976.1"/>
    <property type="status" value="ALT_INIT"/>
    <property type="molecule type" value="Genomic_DNA"/>
</dbReference>
<dbReference type="RefSeq" id="WP_041668780.1">
    <property type="nucleotide sequence ID" value="NC_016894.1"/>
</dbReference>
<dbReference type="PDB" id="9ERI">
    <property type="method" value="EM"/>
    <property type="resolution" value="3.30 A"/>
    <property type="chains" value="A=1-191"/>
</dbReference>
<dbReference type="PDB" id="9ERJ">
    <property type="method" value="EM"/>
    <property type="resolution" value="2.90 A"/>
    <property type="chains" value="A=1-191"/>
</dbReference>
<dbReference type="PDB" id="9ERK">
    <property type="method" value="EM"/>
    <property type="resolution" value="2.80 A"/>
    <property type="chains" value="A=1-191"/>
</dbReference>
<dbReference type="PDB" id="9ERL">
    <property type="method" value="EM"/>
    <property type="resolution" value="3.00 A"/>
    <property type="chains" value="A=1-191"/>
</dbReference>
<dbReference type="PDBsum" id="9ERI"/>
<dbReference type="PDBsum" id="9ERJ"/>
<dbReference type="PDBsum" id="9ERK"/>
<dbReference type="PDBsum" id="9ERL"/>
<dbReference type="EMDB" id="EMD-19915"/>
<dbReference type="EMDB" id="EMD-19916"/>
<dbReference type="EMDB" id="EMD-19919"/>
<dbReference type="EMDB" id="EMD-19920"/>
<dbReference type="SMR" id="H6LC28"/>
<dbReference type="STRING" id="931626.Awo_c22020"/>
<dbReference type="TCDB" id="3.D.6.1.2">
    <property type="family name" value="the ion (h(+) or na(+))-translocating nadh:ferredoxin oxidoreductase (nfo or rnf) family"/>
</dbReference>
<dbReference type="KEGG" id="awo:Awo_c22020"/>
<dbReference type="eggNOG" id="COG4657">
    <property type="taxonomic scope" value="Bacteria"/>
</dbReference>
<dbReference type="HOGENOM" id="CLU_095255_1_0_9"/>
<dbReference type="OrthoDB" id="9803631at2"/>
<dbReference type="BioCyc" id="MetaCyc:MONOMER-21339"/>
<dbReference type="BRENDA" id="7.2.1.2">
    <property type="organism ID" value="52"/>
</dbReference>
<dbReference type="Proteomes" id="UP000007177">
    <property type="component" value="Chromosome"/>
</dbReference>
<dbReference type="GO" id="GO:0005886">
    <property type="term" value="C:plasma membrane"/>
    <property type="evidence" value="ECO:0007669"/>
    <property type="project" value="UniProtKB-SubCell"/>
</dbReference>
<dbReference type="GO" id="GO:0022900">
    <property type="term" value="P:electron transport chain"/>
    <property type="evidence" value="ECO:0007669"/>
    <property type="project" value="UniProtKB-UniRule"/>
</dbReference>
<dbReference type="HAMAP" id="MF_00459">
    <property type="entry name" value="RsxA_RnfA"/>
    <property type="match status" value="1"/>
</dbReference>
<dbReference type="InterPro" id="IPR011293">
    <property type="entry name" value="Ion_transpt_RnfA/RsxA"/>
</dbReference>
<dbReference type="InterPro" id="IPR003667">
    <property type="entry name" value="NqrDE/RnfAE"/>
</dbReference>
<dbReference type="InterPro" id="IPR050133">
    <property type="entry name" value="NqrDE/RnfAE_oxidrdctase"/>
</dbReference>
<dbReference type="NCBIfam" id="NF003481">
    <property type="entry name" value="PRK05151.1"/>
    <property type="match status" value="1"/>
</dbReference>
<dbReference type="NCBIfam" id="TIGR01943">
    <property type="entry name" value="rnfA"/>
    <property type="match status" value="1"/>
</dbReference>
<dbReference type="PANTHER" id="PTHR30335">
    <property type="entry name" value="INTEGRAL MEMBRANE PROTEIN OF SOXR-REDUCING COMPLEX"/>
    <property type="match status" value="1"/>
</dbReference>
<dbReference type="PANTHER" id="PTHR30335:SF0">
    <property type="entry name" value="ION-TRANSLOCATING OXIDOREDUCTASE COMPLEX SUBUNIT A"/>
    <property type="match status" value="1"/>
</dbReference>
<dbReference type="Pfam" id="PF02508">
    <property type="entry name" value="Rnf-Nqr"/>
    <property type="match status" value="1"/>
</dbReference>
<dbReference type="PIRSF" id="PIRSF006102">
    <property type="entry name" value="NQR_DE"/>
    <property type="match status" value="1"/>
</dbReference>
<accession>H6LC28</accession>
<accession>C4N8U4</accession>
<comment type="function">
    <text evidence="2 3">Part of a membrane-bound complex that couples electron transfer with translocation of ions across the membrane. Couples electron transfer from reduced ferredoxin to NAD(+) with electrogenic movement of Na(+) out of the cell. Involved in caffeate respiration.</text>
</comment>
<comment type="catalytic activity">
    <reaction evidence="2 3">
        <text>2 reduced [2Fe-2S]-[ferredoxin] + Na(+)(in) + NAD(+) + H(+) = 2 oxidized [2Fe-2S]-[ferredoxin] + Na(+)(out) + NADH</text>
        <dbReference type="Rhea" id="RHEA:46800"/>
        <dbReference type="Rhea" id="RHEA-COMP:10000"/>
        <dbReference type="Rhea" id="RHEA-COMP:10001"/>
        <dbReference type="ChEBI" id="CHEBI:15378"/>
        <dbReference type="ChEBI" id="CHEBI:29101"/>
        <dbReference type="ChEBI" id="CHEBI:33737"/>
        <dbReference type="ChEBI" id="CHEBI:33738"/>
        <dbReference type="ChEBI" id="CHEBI:57540"/>
        <dbReference type="ChEBI" id="CHEBI:57945"/>
        <dbReference type="EC" id="7.2.1.2"/>
    </reaction>
</comment>
<comment type="subunit">
    <text evidence="1 6">The complex is composed of six subunits: RnfA, RnfB, RnfC, RnfD, RnfE and RnfG.</text>
</comment>
<comment type="subcellular location">
    <subcellularLocation>
        <location evidence="1">Cell membrane</location>
        <topology evidence="1">Multi-pass membrane protein</topology>
    </subcellularLocation>
</comment>
<comment type="similarity">
    <text evidence="1">Belongs to the NqrDE/RnfAE family.</text>
</comment>
<comment type="sequence caution" evidence="5">
    <conflict type="erroneous initiation">
        <sequence resource="EMBL-CDS" id="AFA48976"/>
    </conflict>
    <text>Truncated N-terminus.</text>
</comment>
<organism>
    <name type="scientific">Acetobacterium woodii (strain ATCC 29683 / DSM 1030 / JCM 2381 / KCTC 1655 / WB1)</name>
    <dbReference type="NCBI Taxonomy" id="931626"/>
    <lineage>
        <taxon>Bacteria</taxon>
        <taxon>Bacillati</taxon>
        <taxon>Bacillota</taxon>
        <taxon>Clostridia</taxon>
        <taxon>Eubacteriales</taxon>
        <taxon>Eubacteriaceae</taxon>
        <taxon>Acetobacterium</taxon>
    </lineage>
</organism>
<gene>
    <name evidence="1 4" type="primary">rnfA</name>
    <name evidence="7" type="ordered locus">Awo_c22020</name>
</gene>
<feature type="chain" id="PRO_0000443482" description="Na(+)-translocating ferredoxin:NAD(+) oxidoreductase complex subunit A">
    <location>
        <begin position="1"/>
        <end position="192"/>
    </location>
</feature>
<feature type="transmembrane region" description="Helical" evidence="1">
    <location>
        <begin position="4"/>
        <end position="24"/>
    </location>
</feature>
<feature type="transmembrane region" description="Helical" evidence="1">
    <location>
        <begin position="38"/>
        <end position="58"/>
    </location>
</feature>
<feature type="transmembrane region" description="Helical" evidence="1">
    <location>
        <begin position="71"/>
        <end position="91"/>
    </location>
</feature>
<feature type="transmembrane region" description="Helical" evidence="1">
    <location>
        <begin position="101"/>
        <end position="121"/>
    </location>
</feature>
<feature type="transmembrane region" description="Helical" evidence="1">
    <location>
        <begin position="133"/>
        <end position="153"/>
    </location>
</feature>
<feature type="transmembrane region" description="Helical" evidence="1">
    <location>
        <begin position="169"/>
        <end position="189"/>
    </location>
</feature>
<feature type="sequence conflict" description="In Ref. 1; ACR23746." evidence="5" ref="1">
    <original>P</original>
    <variation>PFLP</variation>
    <location>
        <position position="107"/>
    </location>
</feature>
<protein>
    <recommendedName>
        <fullName evidence="5">Na(+)-translocating ferredoxin:NAD(+) oxidoreductase complex subunit A</fullName>
        <ecNumber evidence="2 3">7.2.1.2</ecNumber>
    </recommendedName>
    <alternativeName>
        <fullName evidence="1 5">Rnf electron transport complex subunit A</fullName>
    </alternativeName>
</protein>
<evidence type="ECO:0000255" key="1">
    <source>
        <dbReference type="HAMAP-Rule" id="MF_00459"/>
    </source>
</evidence>
<evidence type="ECO:0000269" key="2">
    <source>
    </source>
</evidence>
<evidence type="ECO:0000269" key="3">
    <source>
    </source>
</evidence>
<evidence type="ECO:0000303" key="4">
    <source>
    </source>
</evidence>
<evidence type="ECO:0000305" key="5"/>
<evidence type="ECO:0000305" key="6">
    <source>
    </source>
</evidence>
<evidence type="ECO:0000312" key="7">
    <source>
        <dbReference type="EMBL" id="AFA48976.1"/>
    </source>
</evidence>
<reference key="1">
    <citation type="journal article" date="2009" name="Environ. Microbiol.">
        <title>Genetic, immunological and biochemical evidence for a Rnf complex in the acetogen Acetobacterium woodii.</title>
        <authorList>
            <person name="Biegel E."/>
            <person name="Schmidt S."/>
            <person name="Muller V."/>
        </authorList>
    </citation>
    <scope>NUCLEOTIDE SEQUENCE [GENOMIC DNA]</scope>
    <source>
        <strain>ATCC 29683 / DSM 1030 / JCM 2381 / KCTC 1655 / WB1</strain>
    </source>
</reference>
<reference key="2">
    <citation type="submission" date="2011-07" db="EMBL/GenBank/DDBJ databases">
        <title>Complete genome sequence of Acetobacterium woodii.</title>
        <authorList>
            <person name="Poehlein A."/>
            <person name="Schmidt S."/>
            <person name="Kaster A.-K."/>
            <person name="Goenrich M."/>
            <person name="Vollmers J."/>
            <person name="Thuermer A."/>
            <person name="Gottschalk G."/>
            <person name="Thauer R.K."/>
            <person name="Daniel R."/>
            <person name="Mueller V."/>
        </authorList>
    </citation>
    <scope>NUCLEOTIDE SEQUENCE [LARGE SCALE GENOMIC DNA]</scope>
    <source>
        <strain>ATCC 29683 / DSM 1030 / JCM 2381 / KCTC 1655 / WB1</strain>
    </source>
</reference>
<reference key="3">
    <citation type="journal article" date="2010" name="Proc. Natl. Acad. Sci. U.S.A.">
        <title>Bacterial Na+-translocating ferredoxin:NAD+ oxidoreductase.</title>
        <authorList>
            <person name="Biegel E."/>
            <person name="Mueller V."/>
        </authorList>
    </citation>
    <scope>FUNCTION</scope>
    <scope>CATALYTIC ACTIVITY</scope>
    <scope>SUBUNIT</scope>
    <source>
        <strain>ATCC 29683 / DSM 1030 / JCM 2381 / KCTC 1655 / WB1</strain>
    </source>
</reference>
<reference key="4">
    <citation type="journal article" date="2013" name="J. Biol. Chem.">
        <title>The ferredoxin:NAD+ oxidoreductase (Rnf) from the acetogen Acetobacterium woodii requires Na+ and is reversibly coupled to the membrane potential.</title>
        <authorList>
            <person name="Hess V."/>
            <person name="Schuchmann K."/>
            <person name="Mueller V."/>
        </authorList>
    </citation>
    <scope>FUNCTION</scope>
    <scope>CATALYTIC ACTIVITY</scope>
    <source>
        <strain>ATCC 29683 / DSM 1030 / JCM 2381 / KCTC 1655 / WB1</strain>
    </source>
</reference>
<name>RNFA_ACEWD</name>